<gene>
    <name evidence="1" type="primary">fbp</name>
    <name type="ordered locus">llmg_0264</name>
</gene>
<proteinExistence type="inferred from homology"/>
<protein>
    <recommendedName>
        <fullName evidence="1">Fructose-1,6-bisphosphatase class 3</fullName>
        <shortName evidence="1">FBPase class 3</shortName>
        <ecNumber evidence="1">3.1.3.11</ecNumber>
    </recommendedName>
    <alternativeName>
        <fullName evidence="1">D-fructose-1,6-bisphosphate 1-phosphohydrolase class 3</fullName>
    </alternativeName>
</protein>
<dbReference type="EC" id="3.1.3.11" evidence="1"/>
<dbReference type="EMBL" id="AM406671">
    <property type="protein sequence ID" value="CAL96871.1"/>
    <property type="molecule type" value="Genomic_DNA"/>
</dbReference>
<dbReference type="RefSeq" id="WP_011834341.1">
    <property type="nucleotide sequence ID" value="NC_009004.1"/>
</dbReference>
<dbReference type="STRING" id="416870.llmg_0264"/>
<dbReference type="KEGG" id="llm:llmg_0264"/>
<dbReference type="eggNOG" id="COG3855">
    <property type="taxonomic scope" value="Bacteria"/>
</dbReference>
<dbReference type="HOGENOM" id="CLU_028392_2_0_9"/>
<dbReference type="OrthoDB" id="9779903at2"/>
<dbReference type="PhylomeDB" id="A2RHX9"/>
<dbReference type="UniPathway" id="UPA00138"/>
<dbReference type="Proteomes" id="UP000000364">
    <property type="component" value="Chromosome"/>
</dbReference>
<dbReference type="GO" id="GO:0042132">
    <property type="term" value="F:fructose 1,6-bisphosphate 1-phosphatase activity"/>
    <property type="evidence" value="ECO:0007669"/>
    <property type="project" value="UniProtKB-UniRule"/>
</dbReference>
<dbReference type="GO" id="GO:0006094">
    <property type="term" value="P:gluconeogenesis"/>
    <property type="evidence" value="ECO:0007669"/>
    <property type="project" value="UniProtKB-UniRule"/>
</dbReference>
<dbReference type="Gene3D" id="3.60.21.10">
    <property type="match status" value="1"/>
</dbReference>
<dbReference type="HAMAP" id="MF_01854">
    <property type="entry name" value="FBPase_class3"/>
    <property type="match status" value="1"/>
</dbReference>
<dbReference type="InterPro" id="IPR009164">
    <property type="entry name" value="FBPtase_class3"/>
</dbReference>
<dbReference type="InterPro" id="IPR029052">
    <property type="entry name" value="Metallo-depent_PP-like"/>
</dbReference>
<dbReference type="Pfam" id="PF06874">
    <property type="entry name" value="FBPase_2"/>
    <property type="match status" value="1"/>
</dbReference>
<dbReference type="PIRSF" id="PIRSF000906">
    <property type="entry name" value="FBPtase_Bacill"/>
    <property type="match status" value="1"/>
</dbReference>
<dbReference type="SUPFAM" id="SSF56300">
    <property type="entry name" value="Metallo-dependent phosphatases"/>
    <property type="match status" value="1"/>
</dbReference>
<sequence>MDKKYYQLLKKQFSSKEAVLTEIINLSAICELPKATEHFMSDVHGEYDAFNHVLRNGSGSIKEKLRDCFPQFSSAEISSVATLIYYPQEKLDSECQLQDKKLFEHYCRLNLVYLLKTVKFVGQKYTRSKVRKAFPEKFRYILEELINEVDSTTDKQDYFDSILSQLQNLGELTRLIVALADTIRRLTVDHLHVVGDIYDRGPYPDKIIDRLINMPSVDVQWGNHDIVWMAAFSGSPLAMMNVIRICARYGNLDILEESYGINLRAILEYAERYYEPSEAFRPRLVDGVRLSADEKALLNKLQQTTAILQFKLESQLIERRPDFQLEHRDLLHFIDFSQNKIELAGETYDLIDFQAPTINPEQPASLTEEEEKIIAHLLNNFKTSDKLKRHVGFLQEKGAMYLSYNGNLLIHGCLPLHENGDFKSFTIDKKAYAGRDLLDFFDSEVRKCLAHPEESEDLATDLMWYLWVGECSSLFGKTAMTTFERYYIKDKSTHVEKKNPYYQLREQPKIITKILENFGLDENGHLVNGHTPIKEKNGENPIKADGKLIVIDGGFAKAYQKETGIAGYTLLYNSFGIQLVAHQPFSTVKAAVEKGTDIISLKRLVAEVDERKRVKDTNVGQTLLSEIADLEVLFEHYEDY</sequence>
<reference key="1">
    <citation type="journal article" date="2007" name="J. Bacteriol.">
        <title>The complete genome sequence of the lactic acid bacterial paradigm Lactococcus lactis subsp. cremoris MG1363.</title>
        <authorList>
            <person name="Wegmann U."/>
            <person name="O'Connell-Motherway M."/>
            <person name="Zomer A."/>
            <person name="Buist G."/>
            <person name="Shearman C."/>
            <person name="Canchaya C."/>
            <person name="Ventura M."/>
            <person name="Goesmann A."/>
            <person name="Gasson M.J."/>
            <person name="Kuipers O.P."/>
            <person name="van Sinderen D."/>
            <person name="Kok J."/>
        </authorList>
    </citation>
    <scope>NUCLEOTIDE SEQUENCE [LARGE SCALE GENOMIC DNA]</scope>
    <source>
        <strain>MG1363</strain>
    </source>
</reference>
<comment type="catalytic activity">
    <reaction evidence="1">
        <text>beta-D-fructose 1,6-bisphosphate + H2O = beta-D-fructose 6-phosphate + phosphate</text>
        <dbReference type="Rhea" id="RHEA:11064"/>
        <dbReference type="ChEBI" id="CHEBI:15377"/>
        <dbReference type="ChEBI" id="CHEBI:32966"/>
        <dbReference type="ChEBI" id="CHEBI:43474"/>
        <dbReference type="ChEBI" id="CHEBI:57634"/>
        <dbReference type="EC" id="3.1.3.11"/>
    </reaction>
</comment>
<comment type="cofactor">
    <cofactor evidence="1">
        <name>Mn(2+)</name>
        <dbReference type="ChEBI" id="CHEBI:29035"/>
    </cofactor>
</comment>
<comment type="pathway">
    <text evidence="1">Carbohydrate biosynthesis; gluconeogenesis.</text>
</comment>
<comment type="similarity">
    <text evidence="1">Belongs to the FBPase class 3 family.</text>
</comment>
<organism>
    <name type="scientific">Lactococcus lactis subsp. cremoris (strain MG1363)</name>
    <dbReference type="NCBI Taxonomy" id="416870"/>
    <lineage>
        <taxon>Bacteria</taxon>
        <taxon>Bacillati</taxon>
        <taxon>Bacillota</taxon>
        <taxon>Bacilli</taxon>
        <taxon>Lactobacillales</taxon>
        <taxon>Streptococcaceae</taxon>
        <taxon>Lactococcus</taxon>
        <taxon>Lactococcus cremoris subsp. cremoris</taxon>
    </lineage>
</organism>
<name>F16PC_LACLM</name>
<keyword id="KW-0119">Carbohydrate metabolism</keyword>
<keyword id="KW-0378">Hydrolase</keyword>
<keyword id="KW-0464">Manganese</keyword>
<feature type="chain" id="PRO_0000363098" description="Fructose-1,6-bisphosphatase class 3">
    <location>
        <begin position="1"/>
        <end position="640"/>
    </location>
</feature>
<accession>A2RHX9</accession>
<evidence type="ECO:0000255" key="1">
    <source>
        <dbReference type="HAMAP-Rule" id="MF_01854"/>
    </source>
</evidence>